<dbReference type="EMBL" id="X68725">
    <property type="protein sequence ID" value="CAA48668.1"/>
    <property type="molecule type" value="Genomic_DNA"/>
</dbReference>
<dbReference type="PIR" id="S35627">
    <property type="entry name" value="S35627"/>
</dbReference>
<dbReference type="GO" id="GO:0005524">
    <property type="term" value="F:ATP binding"/>
    <property type="evidence" value="ECO:0007669"/>
    <property type="project" value="UniProtKB-KW"/>
</dbReference>
<dbReference type="GO" id="GO:0006310">
    <property type="term" value="P:DNA recombination"/>
    <property type="evidence" value="ECO:0007669"/>
    <property type="project" value="UniProtKB-KW"/>
</dbReference>
<dbReference type="GO" id="GO:0006281">
    <property type="term" value="P:DNA repair"/>
    <property type="evidence" value="ECO:0007669"/>
    <property type="project" value="UniProtKB-KW"/>
</dbReference>
<dbReference type="GO" id="GO:0006260">
    <property type="term" value="P:DNA replication"/>
    <property type="evidence" value="ECO:0007669"/>
    <property type="project" value="UniProtKB-KW"/>
</dbReference>
<gene>
    <name type="primary">UVSX</name>
</gene>
<keyword id="KW-0067">ATP-binding</keyword>
<keyword id="KW-0227">DNA damage</keyword>
<keyword id="KW-0233">DNA recombination</keyword>
<keyword id="KW-0234">DNA repair</keyword>
<keyword id="KW-0235">DNA replication</keyword>
<keyword id="KW-0547">Nucleotide-binding</keyword>
<sequence>MSIADLKSRLIKASTS</sequence>
<organism>
    <name type="scientific">Enterobacteria phage T6</name>
    <name type="common">Bacteriophage T6</name>
    <dbReference type="NCBI Taxonomy" id="10666"/>
    <lineage>
        <taxon>Viruses</taxon>
        <taxon>Duplodnaviria</taxon>
        <taxon>Heunggongvirae</taxon>
        <taxon>Uroviricota</taxon>
        <taxon>Caudoviricetes</taxon>
        <taxon>Straboviridae</taxon>
        <taxon>Tevenvirinae</taxon>
        <taxon>Tequatrovirus</taxon>
        <taxon>Tequatrovirus T6</taxon>
    </lineage>
</organism>
<proteinExistence type="inferred from homology"/>
<comment type="function">
    <text>Important in genetic recombination, DNA repair, and replication. Possesses pairing and strand-transfer activity. Interacts with dda and gene 32 proteins.</text>
</comment>
<comment type="similarity">
    <text evidence="1">Belongs to the RecA family.</text>
</comment>
<reference key="1">
    <citation type="journal article" date="1993" name="Nucleic Acids Res.">
        <title>Cloning and sequencing of the genes of beta-glucosyl-HMC-alpha-glucosyl-transferases of bacteriophages T2 and T6.</title>
        <authorList>
            <person name="Winkler M."/>
            <person name="Rueger W."/>
        </authorList>
    </citation>
    <scope>NUCLEOTIDE SEQUENCE [GENOMIC DNA]</scope>
</reference>
<feature type="chain" id="PRO_0000122960" description="Recombination and repair protein">
    <location>
        <begin position="1"/>
        <end position="16" status="greater than"/>
    </location>
</feature>
<feature type="non-terminal residue">
    <location>
        <position position="16"/>
    </location>
</feature>
<name>UVSX_BPT6</name>
<accession>Q06728</accession>
<evidence type="ECO:0000305" key="1"/>
<protein>
    <recommendedName>
        <fullName>Recombination and repair protein</fullName>
    </recommendedName>
</protein>
<organismHost>
    <name type="scientific">Escherichia coli</name>
    <dbReference type="NCBI Taxonomy" id="562"/>
</organismHost>